<sequence length="1063" mass="120013">MLRLANRVSRKDSGNLGIAQLKKRLLATSGVSQGEILSKYPIGLNMHGYVIEQVQPIPEFSLVAVKLKHSRTGSEHLHLDTPNDKNNVFSVAFKTNAPDATGVPHILEHTTLCGSFKYPVRDPFFKMLNRSLSNFMNAMTGHDYTYYPFATTNAKDFENLMDVYLSSVFEPLLTHESFMQEGWRLENSDLSDPKSPIIFKGVVYNEMKGQYSNSAYYYWIKFQEAIYGSLNNSGGNPNEITDLRYEDLVDFHSSNYHPSNAKTFTYGNIELVNHLNKLNEFFESFGSRGIRTNVRKPITELNPNYESDVTVKGPLDTMSSRPIEEQYKSSITWVIGNPLDESKLYDVFKWKVLSSLLCDGHNSPFYQELIEKEYGEDFAVNYGLDATTALLSFTIGLNNLSLEKAKNLEDKVRGIFVEKIIPELQKGKESGFNDRIEAILHQIELNFKNHKPEFGIGLLSSVVSTWVNGLNPVKSLQIDHILNRFKEDYKLNGLKMFQDLLDESVLKDDTPKFKFTMEPDESFGKNLTSQETERLNKKIEALTEEDKEIIYKRSIELAEKQKKEEDVSALPTLTVKDIPREGDFYPLDFADINSKKLQKRIVDTNGLIYMNATKDISYLPSKYYEYLPLFDCCLTNLAGTSKTPITELEIKIQKLTGGVTFNVSAKTDPFDISKTNMKFMLSGMALKDKSQNVYDLWFEILTQTKFDSEDEQVVDKLFTLVKNLGQNQMNTIADSGHSYANSYSNSQLTPTKYIHNLIGGIGQVSFISDLNRKLETEGRDFLKKELLPVLKDIQRHLVNGFTDGNHSGFEYSLVGDSESVIKNEKMIKEFDDLLTANSNRVAGTNELSSLISQFNSNKLGLNNNGRSTLIDLPFQVGYASLAKLGAAYTSKDGAALRVLSQLLTFKHLHSVIREANGAYGGGLSFDGLGGCLNFYSYRDPNPLTSVQSFKDSTSVALGKMINSENNGWSPKDLQEAKLTIFQGVDAPSHISSQGSLDFLEHITDEMRQERRERFLDVTYEDLKNVTEKYLLNGSQDIVTVIGDNETLKIDSSDAQWNIKKLTA</sequence>
<name>PREP_DEBHA</name>
<organism>
    <name type="scientific">Debaryomyces hansenii (strain ATCC 36239 / CBS 767 / BCRC 21394 / JCM 1990 / NBRC 0083 / IGC 2968)</name>
    <name type="common">Yeast</name>
    <name type="synonym">Torulaspora hansenii</name>
    <dbReference type="NCBI Taxonomy" id="284592"/>
    <lineage>
        <taxon>Eukaryota</taxon>
        <taxon>Fungi</taxon>
        <taxon>Dikarya</taxon>
        <taxon>Ascomycota</taxon>
        <taxon>Saccharomycotina</taxon>
        <taxon>Pichiomycetes</taxon>
        <taxon>Debaryomycetaceae</taxon>
        <taxon>Debaryomyces</taxon>
    </lineage>
</organism>
<accession>Q6BTC0</accession>
<keyword id="KW-0378">Hydrolase</keyword>
<keyword id="KW-0479">Metal-binding</keyword>
<keyword id="KW-0482">Metalloprotease</keyword>
<keyword id="KW-0496">Mitochondrion</keyword>
<keyword id="KW-0645">Protease</keyword>
<keyword id="KW-1185">Reference proteome</keyword>
<keyword id="KW-0809">Transit peptide</keyword>
<keyword id="KW-0862">Zinc</keyword>
<protein>
    <recommendedName>
        <fullName>Presequence protease, mitochondrial</fullName>
        <shortName>PreP</shortName>
        <ecNumber evidence="2">3.4.24.-</ecNumber>
    </recommendedName>
    <alternativeName>
        <fullName>Pitrilysin metalloproteinase</fullName>
    </alternativeName>
</protein>
<gene>
    <name type="primary">CYM1</name>
    <name type="ordered locus">DEHA2D01892g</name>
</gene>
<evidence type="ECO:0000250" key="1">
    <source>
        <dbReference type="UniProtKB" id="A0A8H8UNX0"/>
    </source>
</evidence>
<evidence type="ECO:0000250" key="2">
    <source>
        <dbReference type="UniProtKB" id="P32898"/>
    </source>
</evidence>
<evidence type="ECO:0000250" key="3">
    <source>
        <dbReference type="UniProtKB" id="Q5JRX3"/>
    </source>
</evidence>
<evidence type="ECO:0000250" key="4">
    <source>
        <dbReference type="UniProtKB" id="Q9LJL3"/>
    </source>
</evidence>
<evidence type="ECO:0000255" key="5"/>
<evidence type="ECO:0000305" key="6"/>
<feature type="transit peptide" description="Mitochondrion" evidence="5">
    <location>
        <begin position="1"/>
        <end position="33"/>
    </location>
</feature>
<feature type="chain" id="PRO_0000249945" description="Presequence protease, mitochondrial">
    <location>
        <begin position="34"/>
        <end position="1063"/>
    </location>
</feature>
<feature type="active site" description="Proton acceptor" evidence="3">
    <location>
        <position position="108"/>
    </location>
</feature>
<feature type="active site" evidence="4">
    <location>
        <position position="181"/>
    </location>
</feature>
<feature type="binding site" evidence="3">
    <location>
        <position position="105"/>
    </location>
    <ligand>
        <name>Zn(2+)</name>
        <dbReference type="ChEBI" id="CHEBI:29105"/>
        <note>catalytic</note>
    </ligand>
</feature>
<feature type="binding site" evidence="3">
    <location>
        <position position="109"/>
    </location>
    <ligand>
        <name>Zn(2+)</name>
        <dbReference type="ChEBI" id="CHEBI:29105"/>
        <note>catalytic</note>
    </ligand>
</feature>
<feature type="binding site" evidence="3">
    <location>
        <position position="206"/>
    </location>
    <ligand>
        <name>Zn(2+)</name>
        <dbReference type="ChEBI" id="CHEBI:29105"/>
        <note>catalytic</note>
    </ligand>
</feature>
<proteinExistence type="inferred from homology"/>
<dbReference type="EC" id="3.4.24.-" evidence="2"/>
<dbReference type="EMBL" id="CR382136">
    <property type="protein sequence ID" value="CAG86682.2"/>
    <property type="molecule type" value="Genomic_DNA"/>
</dbReference>
<dbReference type="RefSeq" id="XP_458550.2">
    <property type="nucleotide sequence ID" value="XM_458550.1"/>
</dbReference>
<dbReference type="SMR" id="Q6BTC0"/>
<dbReference type="FunCoup" id="Q6BTC0">
    <property type="interactions" value="683"/>
</dbReference>
<dbReference type="STRING" id="284592.Q6BTC0"/>
<dbReference type="MEROPS" id="M16.013"/>
<dbReference type="GeneID" id="2901568"/>
<dbReference type="KEGG" id="dha:DEHA2D01892g"/>
<dbReference type="VEuPathDB" id="FungiDB:DEHA2D01892g"/>
<dbReference type="eggNOG" id="KOG2019">
    <property type="taxonomic scope" value="Eukaryota"/>
</dbReference>
<dbReference type="HOGENOM" id="CLU_009165_0_0_1"/>
<dbReference type="InParanoid" id="Q6BTC0"/>
<dbReference type="OMA" id="FPFQVHY"/>
<dbReference type="OrthoDB" id="10250783at2759"/>
<dbReference type="Proteomes" id="UP000000599">
    <property type="component" value="Chromosome D"/>
</dbReference>
<dbReference type="GO" id="GO:0005758">
    <property type="term" value="C:mitochondrial intermembrane space"/>
    <property type="evidence" value="ECO:0007669"/>
    <property type="project" value="UniProtKB-SubCell"/>
</dbReference>
<dbReference type="GO" id="GO:0005759">
    <property type="term" value="C:mitochondrial matrix"/>
    <property type="evidence" value="ECO:0007669"/>
    <property type="project" value="UniProtKB-SubCell"/>
</dbReference>
<dbReference type="GO" id="GO:0004176">
    <property type="term" value="F:ATP-dependent peptidase activity"/>
    <property type="evidence" value="ECO:0007669"/>
    <property type="project" value="EnsemblFungi"/>
</dbReference>
<dbReference type="GO" id="GO:0004222">
    <property type="term" value="F:metalloendopeptidase activity"/>
    <property type="evidence" value="ECO:0007669"/>
    <property type="project" value="EnsemblFungi"/>
</dbReference>
<dbReference type="GO" id="GO:0008270">
    <property type="term" value="F:zinc ion binding"/>
    <property type="evidence" value="ECO:0000250"/>
    <property type="project" value="UniProtKB"/>
</dbReference>
<dbReference type="GO" id="GO:0034982">
    <property type="term" value="P:mitochondrial protein processing"/>
    <property type="evidence" value="ECO:0007669"/>
    <property type="project" value="EnsemblFungi"/>
</dbReference>
<dbReference type="GO" id="GO:0016485">
    <property type="term" value="P:protein processing"/>
    <property type="evidence" value="ECO:0000250"/>
    <property type="project" value="UniProtKB"/>
</dbReference>
<dbReference type="GO" id="GO:0051603">
    <property type="term" value="P:proteolysis involved in protein catabolic process"/>
    <property type="evidence" value="ECO:0007669"/>
    <property type="project" value="EnsemblFungi"/>
</dbReference>
<dbReference type="FunFam" id="3.30.830.10:FF:000013">
    <property type="entry name" value="Mitochondrial presequence protease"/>
    <property type="match status" value="1"/>
</dbReference>
<dbReference type="FunFam" id="3.30.830.10:FF:000009">
    <property type="entry name" value="Presequence protease, mitochondrial"/>
    <property type="match status" value="1"/>
</dbReference>
<dbReference type="FunFam" id="3.30.830.10:FF:000011">
    <property type="entry name" value="Presequence protease, mitochondrial"/>
    <property type="match status" value="1"/>
</dbReference>
<dbReference type="Gene3D" id="3.30.830.10">
    <property type="entry name" value="Metalloenzyme, LuxS/M16 peptidase-like"/>
    <property type="match status" value="4"/>
</dbReference>
<dbReference type="InterPro" id="IPR011249">
    <property type="entry name" value="Metalloenz_LuxS/M16"/>
</dbReference>
<dbReference type="InterPro" id="IPR011765">
    <property type="entry name" value="Pept_M16_N"/>
</dbReference>
<dbReference type="InterPro" id="IPR007863">
    <property type="entry name" value="Peptidase_M16_C"/>
</dbReference>
<dbReference type="InterPro" id="IPR013578">
    <property type="entry name" value="Peptidase_M16C_assoc"/>
</dbReference>
<dbReference type="InterPro" id="IPR055130">
    <property type="entry name" value="PreP_C"/>
</dbReference>
<dbReference type="PANTHER" id="PTHR43016">
    <property type="entry name" value="PRESEQUENCE PROTEASE"/>
    <property type="match status" value="1"/>
</dbReference>
<dbReference type="PANTHER" id="PTHR43016:SF13">
    <property type="entry name" value="PRESEQUENCE PROTEASE, MITOCHONDRIAL"/>
    <property type="match status" value="1"/>
</dbReference>
<dbReference type="Pfam" id="PF08367">
    <property type="entry name" value="M16C_assoc"/>
    <property type="match status" value="1"/>
</dbReference>
<dbReference type="Pfam" id="PF00675">
    <property type="entry name" value="Peptidase_M16"/>
    <property type="match status" value="1"/>
</dbReference>
<dbReference type="Pfam" id="PF05193">
    <property type="entry name" value="Peptidase_M16_C"/>
    <property type="match status" value="1"/>
</dbReference>
<dbReference type="Pfam" id="PF22516">
    <property type="entry name" value="PreP_C"/>
    <property type="match status" value="1"/>
</dbReference>
<dbReference type="SMART" id="SM01264">
    <property type="entry name" value="M16C_associated"/>
    <property type="match status" value="1"/>
</dbReference>
<dbReference type="SUPFAM" id="SSF63411">
    <property type="entry name" value="LuxS/MPP-like metallohydrolase"/>
    <property type="match status" value="4"/>
</dbReference>
<reference key="1">
    <citation type="journal article" date="2004" name="Nature">
        <title>Genome evolution in yeasts.</title>
        <authorList>
            <person name="Dujon B."/>
            <person name="Sherman D."/>
            <person name="Fischer G."/>
            <person name="Durrens P."/>
            <person name="Casaregola S."/>
            <person name="Lafontaine I."/>
            <person name="de Montigny J."/>
            <person name="Marck C."/>
            <person name="Neuveglise C."/>
            <person name="Talla E."/>
            <person name="Goffard N."/>
            <person name="Frangeul L."/>
            <person name="Aigle M."/>
            <person name="Anthouard V."/>
            <person name="Babour A."/>
            <person name="Barbe V."/>
            <person name="Barnay S."/>
            <person name="Blanchin S."/>
            <person name="Beckerich J.-M."/>
            <person name="Beyne E."/>
            <person name="Bleykasten C."/>
            <person name="Boisrame A."/>
            <person name="Boyer J."/>
            <person name="Cattolico L."/>
            <person name="Confanioleri F."/>
            <person name="de Daruvar A."/>
            <person name="Despons L."/>
            <person name="Fabre E."/>
            <person name="Fairhead C."/>
            <person name="Ferry-Dumazet H."/>
            <person name="Groppi A."/>
            <person name="Hantraye F."/>
            <person name="Hennequin C."/>
            <person name="Jauniaux N."/>
            <person name="Joyet P."/>
            <person name="Kachouri R."/>
            <person name="Kerrest A."/>
            <person name="Koszul R."/>
            <person name="Lemaire M."/>
            <person name="Lesur I."/>
            <person name="Ma L."/>
            <person name="Muller H."/>
            <person name="Nicaud J.-M."/>
            <person name="Nikolski M."/>
            <person name="Oztas S."/>
            <person name="Ozier-Kalogeropoulos O."/>
            <person name="Pellenz S."/>
            <person name="Potier S."/>
            <person name="Richard G.-F."/>
            <person name="Straub M.-L."/>
            <person name="Suleau A."/>
            <person name="Swennen D."/>
            <person name="Tekaia F."/>
            <person name="Wesolowski-Louvel M."/>
            <person name="Westhof E."/>
            <person name="Wirth B."/>
            <person name="Zeniou-Meyer M."/>
            <person name="Zivanovic Y."/>
            <person name="Bolotin-Fukuhara M."/>
            <person name="Thierry A."/>
            <person name="Bouchier C."/>
            <person name="Caudron B."/>
            <person name="Scarpelli C."/>
            <person name="Gaillardin C."/>
            <person name="Weissenbach J."/>
            <person name="Wincker P."/>
            <person name="Souciet J.-L."/>
        </authorList>
    </citation>
    <scope>NUCLEOTIDE SEQUENCE [LARGE SCALE GENOMIC DNA]</scope>
    <source>
        <strain>ATCC 36239 / CBS 767 / BCRC 21394 / JCM 1990 / NBRC 0083 / IGC 2968</strain>
    </source>
</reference>
<comment type="function">
    <text evidence="1 2">Degrades mitochondrial transit peptides after their cleavage in the intermembrane space or in the matrix, and presequence peptides; clearance of these peptides is required to keep the presequence processing machinery running (By similarity). Preferentially cleaves the N-terminal side of paired basic amino acid residues (By similarity). Also degrades other unstructured peptides (By similarity). May function as an ATP-dependent peptidase as opposed to a metalloendopeptidase (By similarity).</text>
</comment>
<comment type="cofactor">
    <cofactor evidence="3">
        <name>Zn(2+)</name>
        <dbReference type="ChEBI" id="CHEBI:29105"/>
    </cofactor>
    <text evidence="3">Binds 1 zinc ion per subunit.</text>
</comment>
<comment type="subunit">
    <text evidence="3">Monomer and homodimer; homodimerization is induced by binding of the substrate.</text>
</comment>
<comment type="subcellular location">
    <subcellularLocation>
        <location evidence="2">Mitochondrion intermembrane space</location>
    </subcellularLocation>
    <subcellularLocation>
        <location evidence="2">Mitochondrion matrix</location>
    </subcellularLocation>
</comment>
<comment type="similarity">
    <text evidence="6">Belongs to the peptidase M16 family. PreP subfamily.</text>
</comment>